<name>PA2B6_BUNFA</name>
<proteinExistence type="evidence at protein level"/>
<comment type="function">
    <text evidence="5">Snake venom phospholipase A2 (PLA2) that inhibits neuromuscular transmission by blocking acetylcholine release from the nerve termini. PLA2 catalyzes the calcium-dependent hydrolysis of the 2-acyl groups in 3-sn-phosphoglycerides. Very weakly suppress the acetylcholine (ACh)-evoked current mediated by alpha-7-similar nAChRs in L.stagnalis neurons.</text>
</comment>
<comment type="catalytic activity">
    <reaction evidence="2 3">
        <text>a 1,2-diacyl-sn-glycero-3-phosphocholine + H2O = a 1-acyl-sn-glycero-3-phosphocholine + a fatty acid + H(+)</text>
        <dbReference type="Rhea" id="RHEA:15801"/>
        <dbReference type="ChEBI" id="CHEBI:15377"/>
        <dbReference type="ChEBI" id="CHEBI:15378"/>
        <dbReference type="ChEBI" id="CHEBI:28868"/>
        <dbReference type="ChEBI" id="CHEBI:57643"/>
        <dbReference type="ChEBI" id="CHEBI:58168"/>
        <dbReference type="EC" id="3.1.1.4"/>
    </reaction>
</comment>
<comment type="cofactor">
    <cofactor evidence="1">
        <name>Ca(2+)</name>
        <dbReference type="ChEBI" id="CHEBI:29108"/>
    </cofactor>
    <text evidence="1">Binds 1 Ca(2+) ion.</text>
</comment>
<comment type="subcellular location">
    <subcellularLocation>
        <location evidence="4 6">Secreted</location>
    </subcellularLocation>
</comment>
<comment type="tissue specificity">
    <text evidence="9 10">Expressed by the venom gland.</text>
</comment>
<comment type="mass spectrometry" mass="13051.0" error="1.0" method="Electrospray" evidence="4"/>
<comment type="toxic dose">
    <text>LD(50) is 3.6 mg/kg by intraperitoneal injection.</text>
</comment>
<comment type="similarity">
    <text evidence="8">Belongs to the phospholipase A2 family. Group I subfamily. D49 sub-subfamily.</text>
</comment>
<reference key="1">
    <citation type="journal article" date="2007" name="FEBS J.">
        <title>Sequences, geographic variations and molecular phylogeny of venom phospholipases and three-finger toxins of eastern India Bungarus fasciatus and kinetic analyses of its Pro31 phospholipases A2.</title>
        <authorList>
            <person name="Tsai I.-H."/>
            <person name="Tsai H.-Y."/>
            <person name="Saha A."/>
            <person name="Gomes A."/>
        </authorList>
    </citation>
    <scope>NUCLEOTIDE SEQUENCE [MRNA]</scope>
    <scope>PROTEIN SEQUENCE OF 18-37</scope>
    <scope>MASS SPECTROMETRY</scope>
    <scope>SUBCELLULAR LOCATION</scope>
    <source>
        <tissue>Venom</tissue>
        <tissue>Venom gland</tissue>
    </source>
</reference>
<reference key="2">
    <citation type="journal article" date="1978" name="Int. J. Pept. Protein Res.">
        <title>Complete amino acid sequence of a new type of cardiotoxin of Bungarus fasciatus venom.</title>
        <authorList>
            <person name="Lu H.-S."/>
            <person name="Lo T.-B."/>
        </authorList>
    </citation>
    <scope>PROTEIN SEQUENCE OF 18-135</scope>
    <scope>SUBCELLULAR LOCATION</scope>
    <source>
        <tissue>Venom</tissue>
    </source>
</reference>
<reference key="3">
    <citation type="journal article" date="1990" name="Toxicon">
        <title>Revised amino acid sequences of the three major phospholipases A2 from Bungarus fasciatus (banded krait) venom.</title>
        <authorList>
            <person name="Liu C.-S."/>
            <person name="Chen J.-M."/>
            <person name="Chang C.-H."/>
            <person name="Chen S.-W."/>
            <person name="Tsai I.-H."/>
            <person name="Lu H.-S."/>
            <person name="Lo T.-B."/>
        </authorList>
    </citation>
    <scope>SEQUENCE REVISION</scope>
    <source>
        <tissue>Venom</tissue>
    </source>
</reference>
<reference key="4">
    <citation type="journal article" date="2014" name="PLoS ONE">
        <title>Inhibition of nicotinic acetylcholine receptors, a novel facet in the pleiotropic activities of snake venom phospholipases A2.</title>
        <authorList>
            <person name="Vulfius C.A."/>
            <person name="Kasheverov I.E."/>
            <person name="Starkov V.G."/>
            <person name="Osipov A.V."/>
            <person name="Andreeva T.V."/>
            <person name="Filkin S.Y."/>
            <person name="Gorbacheva E.V."/>
            <person name="Astashev M.E."/>
            <person name="Tsetlin V.I."/>
            <person name="Utkin Y.N."/>
        </authorList>
    </citation>
    <scope>FUNCTION</scope>
    <source>
        <tissue>Venom</tissue>
    </source>
</reference>
<protein>
    <recommendedName>
        <fullName>Basic phospholipase A2 6</fullName>
        <shortName>svPLA2</shortName>
        <ecNumber>3.1.1.4</ecNumber>
    </recommendedName>
    <alternativeName>
        <fullName evidence="7">KBf VI</fullName>
    </alternativeName>
    <alternativeName>
        <fullName>KBf-6</fullName>
    </alternativeName>
    <alternativeName>
        <fullName>Phosphatidylcholine 2-acylhydrolase</fullName>
    </alternativeName>
    <alternativeName>
        <fullName>Phospholipase A2 isozyme VI</fullName>
    </alternativeName>
    <alternativeName>
        <fullName>Toxin VI</fullName>
    </alternativeName>
</protein>
<keyword id="KW-0106">Calcium</keyword>
<keyword id="KW-0903">Direct protein sequencing</keyword>
<keyword id="KW-1015">Disulfide bond</keyword>
<keyword id="KW-0378">Hydrolase</keyword>
<keyword id="KW-0442">Lipid degradation</keyword>
<keyword id="KW-0443">Lipid metabolism</keyword>
<keyword id="KW-0479">Metal-binding</keyword>
<keyword id="KW-0528">Neurotoxin</keyword>
<keyword id="KW-0638">Presynaptic neurotoxin</keyword>
<keyword id="KW-0964">Secreted</keyword>
<keyword id="KW-0732">Signal</keyword>
<keyword id="KW-0800">Toxin</keyword>
<sequence length="135" mass="14701">AVCVSLLGAANIPPQSLNLYQFKNMIECAGTRTWLAYVKYGCYCGPGGTGTPLDELDRCCQTHDHCYDNAKKFGNCIPYLKTYVYTCNKPDITCTGAKGSCGRNVCDCDRAAAICFAAAPYNLANFGIDKEKHCQ</sequence>
<organism>
    <name type="scientific">Bungarus fasciatus</name>
    <name type="common">Banded krait</name>
    <name type="synonym">Pseudoboa fasciata</name>
    <dbReference type="NCBI Taxonomy" id="8613"/>
    <lineage>
        <taxon>Eukaryota</taxon>
        <taxon>Metazoa</taxon>
        <taxon>Chordata</taxon>
        <taxon>Craniata</taxon>
        <taxon>Vertebrata</taxon>
        <taxon>Euteleostomi</taxon>
        <taxon>Lepidosauria</taxon>
        <taxon>Squamata</taxon>
        <taxon>Bifurcata</taxon>
        <taxon>Unidentata</taxon>
        <taxon>Episquamata</taxon>
        <taxon>Toxicofera</taxon>
        <taxon>Serpentes</taxon>
        <taxon>Colubroidea</taxon>
        <taxon>Elapidae</taxon>
        <taxon>Bungarinae</taxon>
        <taxon>Bungarus</taxon>
    </lineage>
</organism>
<feature type="signal peptide" evidence="1">
    <location>
        <begin position="1" status="less than"/>
        <end status="unknown"/>
    </location>
</feature>
<feature type="propeptide" id="PRO_0000291950" evidence="4 6">
    <location>
        <begin status="unknown"/>
        <end position="17"/>
    </location>
</feature>
<feature type="chain" id="PRO_0000161638" description="Basic phospholipase A2 6">
    <location>
        <begin position="18"/>
        <end position="135"/>
    </location>
</feature>
<feature type="active site" evidence="1">
    <location>
        <position position="63"/>
    </location>
</feature>
<feature type="active site" evidence="1">
    <location>
        <position position="109"/>
    </location>
</feature>
<feature type="binding site" evidence="1">
    <location>
        <position position="43"/>
    </location>
    <ligand>
        <name>Ca(2+)</name>
        <dbReference type="ChEBI" id="CHEBI:29108"/>
    </ligand>
</feature>
<feature type="binding site" evidence="1">
    <location>
        <position position="45"/>
    </location>
    <ligand>
        <name>Ca(2+)</name>
        <dbReference type="ChEBI" id="CHEBI:29108"/>
    </ligand>
</feature>
<feature type="binding site" evidence="1">
    <location>
        <position position="47"/>
    </location>
    <ligand>
        <name>Ca(2+)</name>
        <dbReference type="ChEBI" id="CHEBI:29108"/>
    </ligand>
</feature>
<feature type="binding site" evidence="1">
    <location>
        <position position="64"/>
    </location>
    <ligand>
        <name>Ca(2+)</name>
        <dbReference type="ChEBI" id="CHEBI:29108"/>
    </ligand>
</feature>
<feature type="disulfide bond" evidence="1">
    <location>
        <begin position="28"/>
        <end position="87"/>
    </location>
</feature>
<feature type="disulfide bond" evidence="1">
    <location>
        <begin position="42"/>
        <end position="134"/>
    </location>
</feature>
<feature type="disulfide bond" evidence="1">
    <location>
        <begin position="44"/>
        <end position="60"/>
    </location>
</feature>
<feature type="disulfide bond" evidence="1">
    <location>
        <begin position="59"/>
        <end position="115"/>
    </location>
</feature>
<feature type="disulfide bond" evidence="1">
    <location>
        <begin position="66"/>
        <end position="108"/>
    </location>
</feature>
<feature type="disulfide bond" evidence="1">
    <location>
        <begin position="76"/>
        <end position="101"/>
    </location>
</feature>
<feature type="disulfide bond" evidence="1">
    <location>
        <begin position="94"/>
        <end position="106"/>
    </location>
</feature>
<feature type="sequence variant">
    <original>N</original>
    <variation>T</variation>
    <location>
        <position position="104"/>
    </location>
</feature>
<feature type="sequence variant">
    <original>D</original>
    <variation>N</variation>
    <location>
        <position position="129"/>
    </location>
</feature>
<feature type="non-terminal residue">
    <location>
        <position position="1"/>
    </location>
</feature>
<evidence type="ECO:0000250" key="1"/>
<evidence type="ECO:0000255" key="2">
    <source>
        <dbReference type="PROSITE-ProRule" id="PRU10035"/>
    </source>
</evidence>
<evidence type="ECO:0000255" key="3">
    <source>
        <dbReference type="PROSITE-ProRule" id="PRU10036"/>
    </source>
</evidence>
<evidence type="ECO:0000269" key="4">
    <source>
    </source>
</evidence>
<evidence type="ECO:0000269" key="5">
    <source>
    </source>
</evidence>
<evidence type="ECO:0000269" key="6">
    <source>
    </source>
</evidence>
<evidence type="ECO:0000303" key="7">
    <source>
    </source>
</evidence>
<evidence type="ECO:0000305" key="8"/>
<evidence type="ECO:0000305" key="9">
    <source>
    </source>
</evidence>
<evidence type="ECO:0000305" key="10">
    <source>
    </source>
</evidence>
<dbReference type="EC" id="3.1.1.4"/>
<dbReference type="EMBL" id="DQ508406">
    <property type="protein sequence ID" value="ABG74585.1"/>
    <property type="molecule type" value="mRNA"/>
</dbReference>
<dbReference type="PIR" id="C36487">
    <property type="entry name" value="PSKFT1"/>
</dbReference>
<dbReference type="SMR" id="P00627"/>
<dbReference type="GO" id="GO:0005576">
    <property type="term" value="C:extracellular region"/>
    <property type="evidence" value="ECO:0007669"/>
    <property type="project" value="UniProtKB-SubCell"/>
</dbReference>
<dbReference type="GO" id="GO:0005509">
    <property type="term" value="F:calcium ion binding"/>
    <property type="evidence" value="ECO:0007669"/>
    <property type="project" value="InterPro"/>
</dbReference>
<dbReference type="GO" id="GO:0047498">
    <property type="term" value="F:calcium-dependent phospholipase A2 activity"/>
    <property type="evidence" value="ECO:0007669"/>
    <property type="project" value="TreeGrafter"/>
</dbReference>
<dbReference type="GO" id="GO:0005543">
    <property type="term" value="F:phospholipid binding"/>
    <property type="evidence" value="ECO:0007669"/>
    <property type="project" value="TreeGrafter"/>
</dbReference>
<dbReference type="GO" id="GO:0005102">
    <property type="term" value="F:signaling receptor binding"/>
    <property type="evidence" value="ECO:0007669"/>
    <property type="project" value="TreeGrafter"/>
</dbReference>
<dbReference type="GO" id="GO:0090729">
    <property type="term" value="F:toxin activity"/>
    <property type="evidence" value="ECO:0007669"/>
    <property type="project" value="UniProtKB-KW"/>
</dbReference>
<dbReference type="GO" id="GO:0050482">
    <property type="term" value="P:arachidonate secretion"/>
    <property type="evidence" value="ECO:0007669"/>
    <property type="project" value="InterPro"/>
</dbReference>
<dbReference type="GO" id="GO:0006633">
    <property type="term" value="P:fatty acid biosynthetic process"/>
    <property type="evidence" value="ECO:0007669"/>
    <property type="project" value="TreeGrafter"/>
</dbReference>
<dbReference type="GO" id="GO:0016042">
    <property type="term" value="P:lipid catabolic process"/>
    <property type="evidence" value="ECO:0007669"/>
    <property type="project" value="UniProtKB-KW"/>
</dbReference>
<dbReference type="GO" id="GO:0006644">
    <property type="term" value="P:phospholipid metabolic process"/>
    <property type="evidence" value="ECO:0007669"/>
    <property type="project" value="InterPro"/>
</dbReference>
<dbReference type="GO" id="GO:0048146">
    <property type="term" value="P:positive regulation of fibroblast proliferation"/>
    <property type="evidence" value="ECO:0007669"/>
    <property type="project" value="TreeGrafter"/>
</dbReference>
<dbReference type="CDD" id="cd00125">
    <property type="entry name" value="PLA2c"/>
    <property type="match status" value="1"/>
</dbReference>
<dbReference type="FunFam" id="1.20.90.10:FF:000007">
    <property type="entry name" value="Acidic phospholipase A2"/>
    <property type="match status" value="1"/>
</dbReference>
<dbReference type="Gene3D" id="1.20.90.10">
    <property type="entry name" value="Phospholipase A2 domain"/>
    <property type="match status" value="1"/>
</dbReference>
<dbReference type="InterPro" id="IPR001211">
    <property type="entry name" value="PLipase_A2"/>
</dbReference>
<dbReference type="InterPro" id="IPR033112">
    <property type="entry name" value="PLipase_A2_Asp_AS"/>
</dbReference>
<dbReference type="InterPro" id="IPR016090">
    <property type="entry name" value="PLipase_A2_dom"/>
</dbReference>
<dbReference type="InterPro" id="IPR036444">
    <property type="entry name" value="PLipase_A2_dom_sf"/>
</dbReference>
<dbReference type="InterPro" id="IPR033113">
    <property type="entry name" value="PLipase_A2_His_AS"/>
</dbReference>
<dbReference type="PANTHER" id="PTHR11716:SF94">
    <property type="entry name" value="PHOSPHOLIPASE A2"/>
    <property type="match status" value="1"/>
</dbReference>
<dbReference type="PANTHER" id="PTHR11716">
    <property type="entry name" value="PHOSPHOLIPASE A2 FAMILY MEMBER"/>
    <property type="match status" value="1"/>
</dbReference>
<dbReference type="Pfam" id="PF00068">
    <property type="entry name" value="Phospholip_A2_1"/>
    <property type="match status" value="1"/>
</dbReference>
<dbReference type="PRINTS" id="PR00389">
    <property type="entry name" value="PHPHLIPASEA2"/>
</dbReference>
<dbReference type="SMART" id="SM00085">
    <property type="entry name" value="PA2c"/>
    <property type="match status" value="1"/>
</dbReference>
<dbReference type="SUPFAM" id="SSF48619">
    <property type="entry name" value="Phospholipase A2, PLA2"/>
    <property type="match status" value="1"/>
</dbReference>
<dbReference type="PROSITE" id="PS00119">
    <property type="entry name" value="PA2_ASP"/>
    <property type="match status" value="1"/>
</dbReference>
<dbReference type="PROSITE" id="PS00118">
    <property type="entry name" value="PA2_HIS"/>
    <property type="match status" value="1"/>
</dbReference>
<accession>P00627</accession>
<accession>A2CIZ7</accession>